<sequence>MFKPNYHFFPITGWMNDPNGLIFWKGKYHMFYQYNPRKPEWGNICWGHAVSDDLVHWRHLPVALYPDDETHGVFSGSAVEKDGKMFLVYTYYRDPTHNKGEKETQCVAMSENGLDFVKYDGNPVISKPPEEGTHAFRDPKVNRSNGEWRMVLGSGKDEKIGRVLLYTSDDLFHWKYEGVIFEDETTKEIECPDLVRIGEKDILIYSITSTNSVLFSMGELKEGKLNVEKRGLLDHGTDFYAAQTFFGTDRVVVIGWLQSWLRTGLYPTKREGWNGVMSLPRELYVENNELKVKPVDELLALRKRKVFETAKSGTFLLDVKENSYEIVCEFSGEIELRMGNESEEVVITKSRDELIVDTTRSGVSGGEVRKSTVEDEATNRIRAFLDSCSVEFFFNDSIAFSFRIHPENVYNILSVKSNQVKLEVFELENIWL</sequence>
<proteinExistence type="evidence at protein level"/>
<accession>O33833</accession>
<reference key="1">
    <citation type="journal article" date="1998" name="Appl. Microbiol. Biotechnol.">
        <title>Analysis of the gene for beta-fructosidase (invertase, inulinase) of the hyperthermophilic bacterium Thermotoga maritima, and characterisation of the enzyme expressed in Escherichia coli.</title>
        <authorList>
            <person name="Liebl W."/>
            <person name="Brem D."/>
            <person name="Gotschlich A."/>
        </authorList>
    </citation>
    <scope>NUCLEOTIDE SEQUENCE [GENOMIC DNA]</scope>
    <scope>CHARACTERIZATION</scope>
    <source>
        <strain>ATCC 43589 / DSM 3109 / JCM 10099 / NBRC 100826 / MSB8</strain>
    </source>
</reference>
<reference key="2">
    <citation type="journal article" date="1999" name="Nature">
        <title>Evidence for lateral gene transfer between Archaea and Bacteria from genome sequence of Thermotoga maritima.</title>
        <authorList>
            <person name="Nelson K.E."/>
            <person name="Clayton R.A."/>
            <person name="Gill S.R."/>
            <person name="Gwinn M.L."/>
            <person name="Dodson R.J."/>
            <person name="Haft D.H."/>
            <person name="Hickey E.K."/>
            <person name="Peterson J.D."/>
            <person name="Nelson W.C."/>
            <person name="Ketchum K.A."/>
            <person name="McDonald L.A."/>
            <person name="Utterback T.R."/>
            <person name="Malek J.A."/>
            <person name="Linher K.D."/>
            <person name="Garrett M.M."/>
            <person name="Stewart A.M."/>
            <person name="Cotton M.D."/>
            <person name="Pratt M.S."/>
            <person name="Phillips C.A."/>
            <person name="Richardson D.L."/>
            <person name="Heidelberg J.F."/>
            <person name="Sutton G.G."/>
            <person name="Fleischmann R.D."/>
            <person name="Eisen J.A."/>
            <person name="White O."/>
            <person name="Salzberg S.L."/>
            <person name="Smith H.O."/>
            <person name="Venter J.C."/>
            <person name="Fraser C.M."/>
        </authorList>
    </citation>
    <scope>NUCLEOTIDE SEQUENCE [LARGE SCALE GENOMIC DNA]</scope>
    <source>
        <strain>ATCC 43589 / DSM 3109 / JCM 10099 / NBRC 100826 / MSB8</strain>
    </source>
</reference>
<reference key="3">
    <citation type="journal article" date="2004" name="J. Biol. Chem.">
        <title>The three-dimensional structure of invertase (beta-fructosidase) from Thermotoga maritima reveals a bimodular arrangement and an evolutionary relationship between retaining and inverting glycosidases.</title>
        <authorList>
            <person name="Alberto F."/>
            <person name="Bignon C."/>
            <person name="Sulzenbacher G."/>
            <person name="Henrissat B."/>
            <person name="Czjzek M."/>
        </authorList>
    </citation>
    <scope>X-RAY CRYSTALLOGRAPHY (1.9 ANGSTROMS) OF 2-432</scope>
</reference>
<reference key="4">
    <citation type="journal article" date="2006" name="Biochem. J.">
        <title>Crystal structure of inactivated Thermotoga maritima invertase in complex with the trisaccharide substrate raffinose.</title>
        <authorList>
            <person name="Alberto F."/>
            <person name="Jordi E."/>
            <person name="Henrissat B."/>
            <person name="Czjzek M."/>
        </authorList>
    </citation>
    <scope>X-RAY CRYSTALLOGRAPHY (1.87 ANGSTROMS) OF 2-432 IN COMPLEX WITH SUBSTRATES</scope>
    <scope>MUTAGENESIS OF GLU-190</scope>
</reference>
<evidence type="ECO:0000255" key="1">
    <source>
        <dbReference type="PROSITE-ProRule" id="PRU10067"/>
    </source>
</evidence>
<evidence type="ECO:0000269" key="2">
    <source>
    </source>
</evidence>
<evidence type="ECO:0000305" key="3"/>
<evidence type="ECO:0007829" key="4">
    <source>
        <dbReference type="PDB" id="1W2T"/>
    </source>
</evidence>
<keyword id="KW-0002">3D-structure</keyword>
<keyword id="KW-0326">Glycosidase</keyword>
<keyword id="KW-0378">Hydrolase</keyword>
<keyword id="KW-1185">Reference proteome</keyword>
<dbReference type="EC" id="3.2.1.26"/>
<dbReference type="EMBL" id="AJ001073">
    <property type="protein sequence ID" value="CAA04518.1"/>
    <property type="molecule type" value="Genomic_DNA"/>
</dbReference>
<dbReference type="EMBL" id="AE000512">
    <property type="protein sequence ID" value="AAD36485.1"/>
    <property type="molecule type" value="Genomic_DNA"/>
</dbReference>
<dbReference type="PIR" id="D72255">
    <property type="entry name" value="D72255"/>
</dbReference>
<dbReference type="RefSeq" id="NP_229215.1">
    <property type="nucleotide sequence ID" value="NC_000853.1"/>
</dbReference>
<dbReference type="RefSeq" id="WP_004081649.1">
    <property type="nucleotide sequence ID" value="NZ_CP011107.1"/>
</dbReference>
<dbReference type="PDB" id="1UYP">
    <property type="method" value="X-ray"/>
    <property type="resolution" value="1.90 A"/>
    <property type="chains" value="A/B/C/D/E/F=2-432"/>
</dbReference>
<dbReference type="PDB" id="1W2T">
    <property type="method" value="X-ray"/>
    <property type="resolution" value="1.87 A"/>
    <property type="chains" value="A/B/C/D/E/F=2-432"/>
</dbReference>
<dbReference type="PDBsum" id="1UYP"/>
<dbReference type="PDBsum" id="1W2T"/>
<dbReference type="SMR" id="O33833"/>
<dbReference type="FunCoup" id="O33833">
    <property type="interactions" value="35"/>
</dbReference>
<dbReference type="STRING" id="243274.TM_1414"/>
<dbReference type="DrugBank" id="DB04272">
    <property type="generic name" value="Citric acid"/>
</dbReference>
<dbReference type="CAZy" id="GH32">
    <property type="family name" value="Glycoside Hydrolase Family 32"/>
</dbReference>
<dbReference type="PaxDb" id="243274-THEMA_07250"/>
<dbReference type="EnsemblBacteria" id="AAD36485">
    <property type="protein sequence ID" value="AAD36485"/>
    <property type="gene ID" value="TM_1414"/>
</dbReference>
<dbReference type="KEGG" id="tma:TM1414"/>
<dbReference type="KEGG" id="tmi:THEMA_07250"/>
<dbReference type="KEGG" id="tmm:Tmari_1420"/>
<dbReference type="KEGG" id="tmw:THMA_1443"/>
<dbReference type="eggNOG" id="COG1621">
    <property type="taxonomic scope" value="Bacteria"/>
</dbReference>
<dbReference type="InParanoid" id="O33833"/>
<dbReference type="OrthoDB" id="9759709at2"/>
<dbReference type="BRENDA" id="3.2.1.26">
    <property type="organism ID" value="6331"/>
</dbReference>
<dbReference type="EvolutionaryTrace" id="O33833"/>
<dbReference type="Proteomes" id="UP000008183">
    <property type="component" value="Chromosome"/>
</dbReference>
<dbReference type="GO" id="GO:0004564">
    <property type="term" value="F:beta-fructofuranosidase activity"/>
    <property type="evidence" value="ECO:0007669"/>
    <property type="project" value="UniProtKB-EC"/>
</dbReference>
<dbReference type="GO" id="GO:0005975">
    <property type="term" value="P:carbohydrate metabolic process"/>
    <property type="evidence" value="ECO:0007669"/>
    <property type="project" value="InterPro"/>
</dbReference>
<dbReference type="CDD" id="cd18625">
    <property type="entry name" value="GH32_BfrA-like"/>
    <property type="match status" value="1"/>
</dbReference>
<dbReference type="Gene3D" id="2.60.120.560">
    <property type="entry name" value="Exo-inulinase, domain 1"/>
    <property type="match status" value="1"/>
</dbReference>
<dbReference type="Gene3D" id="2.115.10.20">
    <property type="entry name" value="Glycosyl hydrolase domain, family 43"/>
    <property type="match status" value="1"/>
</dbReference>
<dbReference type="InterPro" id="IPR013320">
    <property type="entry name" value="ConA-like_dom_sf"/>
</dbReference>
<dbReference type="InterPro" id="IPR051214">
    <property type="entry name" value="GH32_Enzymes"/>
</dbReference>
<dbReference type="InterPro" id="IPR001362">
    <property type="entry name" value="Glyco_hydro_32"/>
</dbReference>
<dbReference type="InterPro" id="IPR018053">
    <property type="entry name" value="Glyco_hydro_32_AS"/>
</dbReference>
<dbReference type="InterPro" id="IPR013189">
    <property type="entry name" value="Glyco_hydro_32_C"/>
</dbReference>
<dbReference type="InterPro" id="IPR013148">
    <property type="entry name" value="Glyco_hydro_32_N"/>
</dbReference>
<dbReference type="InterPro" id="IPR023296">
    <property type="entry name" value="Glyco_hydro_beta-prop_sf"/>
</dbReference>
<dbReference type="NCBIfam" id="NF041092">
    <property type="entry name" value="beta-fruc_BfrA"/>
    <property type="match status" value="1"/>
</dbReference>
<dbReference type="PANTHER" id="PTHR43101">
    <property type="entry name" value="BETA-FRUCTOSIDASE"/>
    <property type="match status" value="1"/>
</dbReference>
<dbReference type="PANTHER" id="PTHR43101:SF1">
    <property type="entry name" value="BETA-FRUCTOSIDASE"/>
    <property type="match status" value="1"/>
</dbReference>
<dbReference type="Pfam" id="PF08244">
    <property type="entry name" value="Glyco_hydro_32C"/>
    <property type="match status" value="1"/>
</dbReference>
<dbReference type="Pfam" id="PF00251">
    <property type="entry name" value="Glyco_hydro_32N"/>
    <property type="match status" value="1"/>
</dbReference>
<dbReference type="SMART" id="SM00640">
    <property type="entry name" value="Glyco_32"/>
    <property type="match status" value="1"/>
</dbReference>
<dbReference type="SUPFAM" id="SSF75005">
    <property type="entry name" value="Arabinanase/levansucrase/invertase"/>
    <property type="match status" value="1"/>
</dbReference>
<dbReference type="SUPFAM" id="SSF49899">
    <property type="entry name" value="Concanavalin A-like lectins/glucanases"/>
    <property type="match status" value="1"/>
</dbReference>
<dbReference type="PROSITE" id="PS00609">
    <property type="entry name" value="GLYCOSYL_HYDROL_F32"/>
    <property type="match status" value="1"/>
</dbReference>
<comment type="function">
    <text>Hydrolysis of sucrose, raffinose, inulin and levan. Specific for the fructose moiety and the beta-anomeric configuration of the glycosidic linkages of its substrates. The enzyme released fructose from sucrose and raffinose, and the fructose polymer inulin is hydrolyzed quantitatively in an exo-type fashion.</text>
</comment>
<comment type="catalytic activity">
    <reaction evidence="1">
        <text>Hydrolysis of terminal non-reducing beta-D-fructofuranoside residues in beta-D-fructofuranosides.</text>
        <dbReference type="EC" id="3.2.1.26"/>
    </reaction>
</comment>
<comment type="biophysicochemical properties">
    <temperatureDependence>
        <text>Optimum temperature is 90-95 degrees Celsius. Highly thermostable.</text>
    </temperatureDependence>
</comment>
<comment type="similarity">
    <text evidence="3">Belongs to the glycosyl hydrolase 32 family.</text>
</comment>
<organism>
    <name type="scientific">Thermotoga maritima (strain ATCC 43589 / DSM 3109 / JCM 10099 / NBRC 100826 / MSB8)</name>
    <dbReference type="NCBI Taxonomy" id="243274"/>
    <lineage>
        <taxon>Bacteria</taxon>
        <taxon>Thermotogati</taxon>
        <taxon>Thermotogota</taxon>
        <taxon>Thermotogae</taxon>
        <taxon>Thermotogales</taxon>
        <taxon>Thermotogaceae</taxon>
        <taxon>Thermotoga</taxon>
    </lineage>
</organism>
<name>BFRA_THEMA</name>
<protein>
    <recommendedName>
        <fullName>Beta-fructosidase</fullName>
        <ecNumber>3.2.1.26</ecNumber>
    </recommendedName>
    <alternativeName>
        <fullName>Invertase</fullName>
    </alternativeName>
    <alternativeName>
        <fullName>Sucrase</fullName>
    </alternativeName>
</protein>
<feature type="chain" id="PRO_0000169881" description="Beta-fructosidase">
    <location>
        <begin position="1"/>
        <end position="432"/>
    </location>
</feature>
<feature type="active site">
    <location>
        <position position="17"/>
    </location>
</feature>
<feature type="binding site">
    <location>
        <begin position="14"/>
        <end position="17"/>
    </location>
    <ligand>
        <name>substrate</name>
    </ligand>
</feature>
<feature type="binding site">
    <location>
        <position position="33"/>
    </location>
    <ligand>
        <name>substrate</name>
    </ligand>
</feature>
<feature type="binding site">
    <location>
        <position position="41"/>
    </location>
    <ligand>
        <name>substrate</name>
    </ligand>
</feature>
<feature type="binding site">
    <location>
        <begin position="74"/>
        <end position="75"/>
    </location>
    <ligand>
        <name>substrate</name>
    </ligand>
</feature>
<feature type="binding site">
    <location>
        <position position="92"/>
    </location>
    <ligand>
        <name>substrate</name>
    </ligand>
</feature>
<feature type="binding site">
    <location>
        <begin position="137"/>
        <end position="138"/>
    </location>
    <ligand>
        <name>substrate</name>
    </ligand>
</feature>
<feature type="binding site">
    <location>
        <begin position="188"/>
        <end position="190"/>
    </location>
    <ligand>
        <name>substrate</name>
    </ligand>
</feature>
<feature type="binding site">
    <location>
        <position position="208"/>
    </location>
    <ligand>
        <name>substrate</name>
    </ligand>
</feature>
<feature type="binding site">
    <location>
        <position position="260"/>
    </location>
    <ligand>
        <name>substrate</name>
    </ligand>
</feature>
<feature type="mutagenesis site" description="Loss of activity." evidence="2">
    <original>E</original>
    <variation>A</variation>
    <location>
        <position position="190"/>
    </location>
</feature>
<feature type="mutagenesis site" description="Reduced activity." evidence="2">
    <original>E</original>
    <variation>D</variation>
    <location>
        <position position="190"/>
    </location>
</feature>
<feature type="strand" evidence="4">
    <location>
        <begin position="5"/>
        <end position="7"/>
    </location>
</feature>
<feature type="strand" evidence="4">
    <location>
        <begin position="11"/>
        <end position="24"/>
    </location>
</feature>
<feature type="strand" evidence="4">
    <location>
        <begin position="27"/>
        <end position="35"/>
    </location>
</feature>
<feature type="strand" evidence="4">
    <location>
        <begin position="38"/>
        <end position="40"/>
    </location>
</feature>
<feature type="strand" evidence="4">
    <location>
        <begin position="45"/>
        <end position="56"/>
    </location>
</feature>
<feature type="strand" evidence="4">
    <location>
        <begin position="58"/>
        <end position="64"/>
    </location>
</feature>
<feature type="strand" evidence="4">
    <location>
        <begin position="71"/>
        <end position="81"/>
    </location>
</feature>
<feature type="strand" evidence="4">
    <location>
        <begin position="84"/>
        <end position="93"/>
    </location>
</feature>
<feature type="strand" evidence="4">
    <location>
        <begin position="102"/>
        <end position="114"/>
    </location>
</feature>
<feature type="strand" evidence="4">
    <location>
        <begin position="133"/>
        <end position="143"/>
    </location>
</feature>
<feature type="strand" evidence="4">
    <location>
        <begin position="145"/>
        <end position="156"/>
    </location>
</feature>
<feature type="turn" evidence="4">
    <location>
        <begin position="157"/>
        <end position="159"/>
    </location>
</feature>
<feature type="strand" evidence="4">
    <location>
        <begin position="160"/>
        <end position="173"/>
    </location>
</feature>
<feature type="strand" evidence="4">
    <location>
        <begin position="175"/>
        <end position="183"/>
    </location>
</feature>
<feature type="strand" evidence="4">
    <location>
        <begin position="190"/>
        <end position="197"/>
    </location>
</feature>
<feature type="strand" evidence="4">
    <location>
        <begin position="200"/>
        <end position="207"/>
    </location>
</feature>
<feature type="turn" evidence="4">
    <location>
        <begin position="208"/>
        <end position="211"/>
    </location>
</feature>
<feature type="strand" evidence="4">
    <location>
        <begin position="212"/>
        <end position="221"/>
    </location>
</feature>
<feature type="strand" evidence="4">
    <location>
        <begin position="224"/>
        <end position="233"/>
    </location>
</feature>
<feature type="strand" evidence="4">
    <location>
        <begin position="236"/>
        <end position="238"/>
    </location>
</feature>
<feature type="strand" evidence="4">
    <location>
        <begin position="240"/>
        <end position="244"/>
    </location>
</feature>
<feature type="strand" evidence="4">
    <location>
        <begin position="249"/>
        <end position="258"/>
    </location>
</feature>
<feature type="turn" evidence="4">
    <location>
        <begin position="260"/>
        <end position="262"/>
    </location>
</feature>
<feature type="helix" evidence="4">
    <location>
        <begin position="263"/>
        <end position="265"/>
    </location>
</feature>
<feature type="helix" evidence="4">
    <location>
        <begin position="268"/>
        <end position="271"/>
    </location>
</feature>
<feature type="strand" evidence="4">
    <location>
        <begin position="281"/>
        <end position="286"/>
    </location>
</feature>
<feature type="strand" evidence="4">
    <location>
        <begin position="289"/>
        <end position="294"/>
    </location>
</feature>
<feature type="helix" evidence="4">
    <location>
        <begin position="296"/>
        <end position="301"/>
    </location>
</feature>
<feature type="strand" evidence="4">
    <location>
        <begin position="302"/>
        <end position="311"/>
    </location>
</feature>
<feature type="strand" evidence="4">
    <location>
        <begin position="313"/>
        <end position="316"/>
    </location>
</feature>
<feature type="strand" evidence="4">
    <location>
        <begin position="320"/>
        <end position="322"/>
    </location>
</feature>
<feature type="strand" evidence="4">
    <location>
        <begin position="324"/>
        <end position="339"/>
    </location>
</feature>
<feature type="strand" evidence="4">
    <location>
        <begin position="344"/>
        <end position="350"/>
    </location>
</feature>
<feature type="strand" evidence="4">
    <location>
        <begin position="353"/>
        <end position="357"/>
    </location>
</feature>
<feature type="strand" evidence="4">
    <location>
        <begin position="368"/>
        <end position="372"/>
    </location>
</feature>
<feature type="strand" evidence="4">
    <location>
        <begin position="377"/>
        <end position="386"/>
    </location>
</feature>
<feature type="strand" evidence="4">
    <location>
        <begin position="389"/>
        <end position="394"/>
    </location>
</feature>
<feature type="turn" evidence="4">
    <location>
        <begin position="395"/>
        <end position="397"/>
    </location>
</feature>
<feature type="strand" evidence="4">
    <location>
        <begin position="398"/>
        <end position="403"/>
    </location>
</feature>
<feature type="strand" evidence="4">
    <location>
        <begin position="412"/>
        <end position="427"/>
    </location>
</feature>
<gene>
    <name type="primary">bfrA</name>
    <name type="ordered locus">TM_1414</name>
</gene>